<dbReference type="EMBL" id="AJ936934">
    <property type="protein sequence ID" value="CAI77668.2"/>
    <property type="status" value="ALT_INIT"/>
    <property type="molecule type" value="mRNA"/>
</dbReference>
<dbReference type="RefSeq" id="NP_001120912.1">
    <property type="nucleotide sequence ID" value="NM_001127440.1"/>
</dbReference>
<dbReference type="FunCoup" id="Q1XFL1">
    <property type="interactions" value="18"/>
</dbReference>
<dbReference type="STRING" id="9913.ENSBTAP00000037315"/>
<dbReference type="PaxDb" id="9913-ENSBTAP00000037315"/>
<dbReference type="GeneID" id="616037"/>
<dbReference type="KEGG" id="bta:616037"/>
<dbReference type="CTD" id="646799"/>
<dbReference type="eggNOG" id="ENOG502QWC9">
    <property type="taxonomic scope" value="Eukaryota"/>
</dbReference>
<dbReference type="HOGENOM" id="CLU_053350_1_0_1"/>
<dbReference type="InParanoid" id="Q1XFL1"/>
<dbReference type="OrthoDB" id="9885288at2759"/>
<dbReference type="TreeFam" id="TF331383"/>
<dbReference type="Proteomes" id="UP000009136">
    <property type="component" value="Unplaced"/>
</dbReference>
<dbReference type="GO" id="GO:0005737">
    <property type="term" value="C:cytoplasm"/>
    <property type="evidence" value="ECO:0000318"/>
    <property type="project" value="GO_Central"/>
</dbReference>
<dbReference type="GO" id="GO:0036464">
    <property type="term" value="C:cytoplasmic ribonucleoprotein granule"/>
    <property type="evidence" value="ECO:0007669"/>
    <property type="project" value="UniProtKB-SubCell"/>
</dbReference>
<dbReference type="GO" id="GO:0043232">
    <property type="term" value="C:intracellular membraneless organelle"/>
    <property type="evidence" value="ECO:0000250"/>
    <property type="project" value="UniProtKB"/>
</dbReference>
<dbReference type="GO" id="GO:0003730">
    <property type="term" value="F:mRNA 3'-UTR binding"/>
    <property type="evidence" value="ECO:0000250"/>
    <property type="project" value="UniProtKB"/>
</dbReference>
<dbReference type="GO" id="GO:0008270">
    <property type="term" value="F:zinc ion binding"/>
    <property type="evidence" value="ECO:0007669"/>
    <property type="project" value="UniProtKB-KW"/>
</dbReference>
<dbReference type="GO" id="GO:0017148">
    <property type="term" value="P:negative regulation of translation"/>
    <property type="evidence" value="ECO:0000250"/>
    <property type="project" value="UniProtKB"/>
</dbReference>
<dbReference type="GO" id="GO:0001556">
    <property type="term" value="P:oocyte maturation"/>
    <property type="evidence" value="ECO:0000250"/>
    <property type="project" value="UniProtKB"/>
</dbReference>
<dbReference type="GO" id="GO:0006412">
    <property type="term" value="P:translation"/>
    <property type="evidence" value="ECO:0000318"/>
    <property type="project" value="GO_Central"/>
</dbReference>
<dbReference type="InterPro" id="IPR026775">
    <property type="entry name" value="Zar1"/>
</dbReference>
<dbReference type="InterPro" id="IPR027377">
    <property type="entry name" value="ZAR1/RTP1-5-like_Znf-3CxxC"/>
</dbReference>
<dbReference type="PANTHER" id="PTHR31054:SF5">
    <property type="entry name" value="PROTEIN ZAR1-LIKE"/>
    <property type="match status" value="1"/>
</dbReference>
<dbReference type="PANTHER" id="PTHR31054">
    <property type="entry name" value="ZYGOTE ARREST PROTEIN 1-LIKE ISOFORM X1"/>
    <property type="match status" value="1"/>
</dbReference>
<dbReference type="Pfam" id="PF13695">
    <property type="entry name" value="Zn_ribbon_3CxxC"/>
    <property type="match status" value="1"/>
</dbReference>
<dbReference type="SMART" id="SM01328">
    <property type="entry name" value="zf-3CxxC"/>
    <property type="match status" value="1"/>
</dbReference>
<keyword id="KW-0963">Cytoplasm</keyword>
<keyword id="KW-0217">Developmental protein</keyword>
<keyword id="KW-0221">Differentiation</keyword>
<keyword id="KW-0479">Metal-binding</keyword>
<keyword id="KW-0896">Oogenesis</keyword>
<keyword id="KW-1185">Reference proteome</keyword>
<keyword id="KW-0694">RNA-binding</keyword>
<keyword id="KW-0862">Zinc</keyword>
<keyword id="KW-0863">Zinc-finger</keyword>
<proteinExistence type="evidence at transcript level"/>
<name>ZAR1L_BOVIN</name>
<reference key="1">
    <citation type="journal article" date="2008" name="Comp. Biochem. Physiol.">
        <title>A putative protein structurally related to zygote arrest 1 (Zar1), Zar1-like, is encoded by a novel gene conserved in the vertebrate lineage.</title>
        <authorList>
            <person name="Sangiorgio L."/>
            <person name="Strumbo B."/>
            <person name="Brevini T.A."/>
            <person name="Ronchi S."/>
            <person name="Simonic T."/>
        </authorList>
    </citation>
    <scope>NUCLEOTIDE SEQUENCE [MRNA]</scope>
    <source>
        <tissue>Ovary</tissue>
    </source>
</reference>
<sequence length="318" mass="36053">MERIFCVPYSLYPGYGNMLRLGQSGLSEPRQPHWRQTNVPPTFLARPRLLMPSNASDCCVDPYKRAQLMAVFSHMNPGLSLRLRKANTKDVGVQVSLRVGKSVQCSLGPRTLDSLSPWASAGHRAPASAWGVSSSVPGHWGEVRLREELSDPPEAGQPPPPLPPPSPPPRSEEDPPEELQPREELVEEDSSSPRERKSKPAPVDSSQPLGRPNFQFLEPKYGYFHCKDCKTRWESAYVWCISGTNKVYFKQLCCKCQKSFNPYRVEAIQCQTCSKSRCSCPQKKRHINLRRPHRQELCGRCKDKRFSCGSIYSFKYIM</sequence>
<comment type="function">
    <text evidence="1 2">mRNA-binding protein required for maternal mRNA storage, translation and degradation during oocyte maturation (By similarity). Probably promotes formation of some phase-separated membraneless compartment that stores maternal mRNAs in oocytes: acts by undergoing liquid-liquid phase separation upon binding to maternal mRNAs (By similarity). Binds to the 3'-UTR of maternal mRNAs, inhibiting their translation (By similarity).</text>
</comment>
<comment type="subunit">
    <text evidence="1">Interacts with YBX2.</text>
</comment>
<comment type="subcellular location">
    <subcellularLocation>
        <location evidence="1">Cytoplasm</location>
        <location evidence="1">Cytoplasmic ribonucleoprotein granule</location>
    </subcellularLocation>
</comment>
<comment type="domain">
    <text evidence="2">Disordered region at the N-terminus undergoes liquid-liquid phase separation (LLPS) for the formation of membraneless compartments that store maternal mRNAs in oocytes.</text>
</comment>
<comment type="domain">
    <text evidence="1">The 3CxxC-type mediates binding to the 3'-UTR of mRNAs.</text>
</comment>
<comment type="similarity">
    <text evidence="5">Belongs to the ZAR1 family.</text>
</comment>
<comment type="sequence caution" evidence="5">
    <conflict type="erroneous initiation">
        <sequence resource="EMBL-CDS" id="CAI77668"/>
    </conflict>
</comment>
<feature type="chain" id="PRO_0000332226" description="ZAR1-like protein">
    <location>
        <begin position="1"/>
        <end position="318"/>
    </location>
</feature>
<feature type="zinc finger region" description="3CxxC-type" evidence="3">
    <location>
        <begin position="219"/>
        <end position="304"/>
    </location>
</feature>
<feature type="region of interest" description="Disordered" evidence="4">
    <location>
        <begin position="149"/>
        <end position="211"/>
    </location>
</feature>
<feature type="compositionally biased region" description="Pro residues" evidence="4">
    <location>
        <begin position="155"/>
        <end position="169"/>
    </location>
</feature>
<accession>Q1XFL1</accession>
<evidence type="ECO:0000250" key="1">
    <source>
        <dbReference type="UniProtKB" id="C3VD30"/>
    </source>
</evidence>
<evidence type="ECO:0000250" key="2">
    <source>
        <dbReference type="UniProtKB" id="Q80SU3"/>
    </source>
</evidence>
<evidence type="ECO:0000255" key="3"/>
<evidence type="ECO:0000256" key="4">
    <source>
        <dbReference type="SAM" id="MobiDB-lite"/>
    </source>
</evidence>
<evidence type="ECO:0000305" key="5"/>
<gene>
    <name type="primary">ZAR1L</name>
</gene>
<protein>
    <recommendedName>
        <fullName evidence="5">ZAR1-like protein</fullName>
    </recommendedName>
</protein>
<organism>
    <name type="scientific">Bos taurus</name>
    <name type="common">Bovine</name>
    <dbReference type="NCBI Taxonomy" id="9913"/>
    <lineage>
        <taxon>Eukaryota</taxon>
        <taxon>Metazoa</taxon>
        <taxon>Chordata</taxon>
        <taxon>Craniata</taxon>
        <taxon>Vertebrata</taxon>
        <taxon>Euteleostomi</taxon>
        <taxon>Mammalia</taxon>
        <taxon>Eutheria</taxon>
        <taxon>Laurasiatheria</taxon>
        <taxon>Artiodactyla</taxon>
        <taxon>Ruminantia</taxon>
        <taxon>Pecora</taxon>
        <taxon>Bovidae</taxon>
        <taxon>Bovinae</taxon>
        <taxon>Bos</taxon>
    </lineage>
</organism>